<organism>
    <name type="scientific">Methanothermobacter thermautotrophicus (strain ATCC 29096 / DSM 1053 / JCM 10044 / NBRC 100330 / Delta H)</name>
    <name type="common">Methanobacterium thermoautotrophicum</name>
    <dbReference type="NCBI Taxonomy" id="187420"/>
    <lineage>
        <taxon>Archaea</taxon>
        <taxon>Methanobacteriati</taxon>
        <taxon>Methanobacteriota</taxon>
        <taxon>Methanomada group</taxon>
        <taxon>Methanobacteria</taxon>
        <taxon>Methanobacteriales</taxon>
        <taxon>Methanobacteriaceae</taxon>
        <taxon>Methanothermobacter</taxon>
    </lineage>
</organism>
<reference key="1">
    <citation type="journal article" date="1997" name="J. Bacteriol.">
        <title>Complete genome sequence of Methanobacterium thermoautotrophicum deltaH: functional analysis and comparative genomics.</title>
        <authorList>
            <person name="Smith D.R."/>
            <person name="Doucette-Stamm L.A."/>
            <person name="Deloughery C."/>
            <person name="Lee H.-M."/>
            <person name="Dubois J."/>
            <person name="Aldredge T."/>
            <person name="Bashirzadeh R."/>
            <person name="Blakely D."/>
            <person name="Cook R."/>
            <person name="Gilbert K."/>
            <person name="Harrison D."/>
            <person name="Hoang L."/>
            <person name="Keagle P."/>
            <person name="Lumm W."/>
            <person name="Pothier B."/>
            <person name="Qiu D."/>
            <person name="Spadafora R."/>
            <person name="Vicare R."/>
            <person name="Wang Y."/>
            <person name="Wierzbowski J."/>
            <person name="Gibson R."/>
            <person name="Jiwani N."/>
            <person name="Caruso A."/>
            <person name="Bush D."/>
            <person name="Safer H."/>
            <person name="Patwell D."/>
            <person name="Prabhakar S."/>
            <person name="McDougall S."/>
            <person name="Shimer G."/>
            <person name="Goyal A."/>
            <person name="Pietrovski S."/>
            <person name="Church G.M."/>
            <person name="Daniels C.J."/>
            <person name="Mao J.-I."/>
            <person name="Rice P."/>
            <person name="Noelling J."/>
            <person name="Reeve J.N."/>
        </authorList>
    </citation>
    <scope>NUCLEOTIDE SEQUENCE [LARGE SCALE GENOMIC DNA]</scope>
    <source>
        <strain>ATCC 29096 / DSM 1053 / JCM 10044 / NBRC 100330 / Delta H</strain>
    </source>
</reference>
<dbReference type="EMBL" id="AE000666">
    <property type="protein sequence ID" value="AAB84551.1"/>
    <property type="molecule type" value="Genomic_DNA"/>
</dbReference>
<dbReference type="PIR" id="D69157">
    <property type="entry name" value="D69157"/>
</dbReference>
<dbReference type="SMR" id="O26150"/>
<dbReference type="FunCoup" id="O26150">
    <property type="interactions" value="145"/>
</dbReference>
<dbReference type="STRING" id="187420.MTH_44"/>
<dbReference type="PaxDb" id="187420-MTH_44"/>
<dbReference type="EnsemblBacteria" id="AAB84551">
    <property type="protein sequence ID" value="AAB84551"/>
    <property type="gene ID" value="MTH_44"/>
</dbReference>
<dbReference type="KEGG" id="mth:MTH_44"/>
<dbReference type="PATRIC" id="fig|187420.15.peg.42"/>
<dbReference type="HOGENOM" id="CLU_058171_3_0_2"/>
<dbReference type="InParanoid" id="O26150"/>
<dbReference type="Proteomes" id="UP000005223">
    <property type="component" value="Chromosome"/>
</dbReference>
<dbReference type="GO" id="GO:0015935">
    <property type="term" value="C:small ribosomal subunit"/>
    <property type="evidence" value="ECO:0007669"/>
    <property type="project" value="InterPro"/>
</dbReference>
<dbReference type="GO" id="GO:0003735">
    <property type="term" value="F:structural constituent of ribosome"/>
    <property type="evidence" value="ECO:0007669"/>
    <property type="project" value="InterPro"/>
</dbReference>
<dbReference type="GO" id="GO:0006412">
    <property type="term" value="P:translation"/>
    <property type="evidence" value="ECO:0007669"/>
    <property type="project" value="UniProtKB-UniRule"/>
</dbReference>
<dbReference type="CDD" id="cd01425">
    <property type="entry name" value="RPS2"/>
    <property type="match status" value="1"/>
</dbReference>
<dbReference type="FunFam" id="3.40.50.10490:FF:000030">
    <property type="entry name" value="30S ribosomal protein S2"/>
    <property type="match status" value="1"/>
</dbReference>
<dbReference type="Gene3D" id="3.40.50.10490">
    <property type="entry name" value="Glucose-6-phosphate isomerase like protein, domain 1"/>
    <property type="match status" value="1"/>
</dbReference>
<dbReference type="HAMAP" id="MF_00291_A">
    <property type="entry name" value="Ribosomal_uS2_A"/>
    <property type="match status" value="1"/>
</dbReference>
<dbReference type="InterPro" id="IPR001865">
    <property type="entry name" value="Ribosomal_uS2"/>
</dbReference>
<dbReference type="InterPro" id="IPR023454">
    <property type="entry name" value="Ribosomal_uS2_arc"/>
</dbReference>
<dbReference type="InterPro" id="IPR018130">
    <property type="entry name" value="Ribosomal_uS2_CS"/>
</dbReference>
<dbReference type="InterPro" id="IPR005707">
    <property type="entry name" value="Ribosomal_uS2_euk/arc"/>
</dbReference>
<dbReference type="InterPro" id="IPR023591">
    <property type="entry name" value="Ribosomal_uS2_flav_dom_sf"/>
</dbReference>
<dbReference type="NCBIfam" id="TIGR01012">
    <property type="entry name" value="uS2_euk_arch"/>
    <property type="match status" value="1"/>
</dbReference>
<dbReference type="PANTHER" id="PTHR11489">
    <property type="entry name" value="40S RIBOSOMAL PROTEIN SA"/>
    <property type="match status" value="1"/>
</dbReference>
<dbReference type="Pfam" id="PF00318">
    <property type="entry name" value="Ribosomal_S2"/>
    <property type="match status" value="2"/>
</dbReference>
<dbReference type="PRINTS" id="PR00395">
    <property type="entry name" value="RIBOSOMALS2"/>
</dbReference>
<dbReference type="SUPFAM" id="SSF52313">
    <property type="entry name" value="Ribosomal protein S2"/>
    <property type="match status" value="1"/>
</dbReference>
<dbReference type="PROSITE" id="PS00962">
    <property type="entry name" value="RIBOSOMAL_S2_1"/>
    <property type="match status" value="1"/>
</dbReference>
<evidence type="ECO:0000305" key="1"/>
<protein>
    <recommendedName>
        <fullName evidence="1">Small ribosomal subunit protein uS2</fullName>
    </recommendedName>
    <alternativeName>
        <fullName>30S ribosomal protein S2</fullName>
    </alternativeName>
</protein>
<feature type="chain" id="PRO_0000134326" description="Small ribosomal subunit protein uS2">
    <location>
        <begin position="1"/>
        <end position="198"/>
    </location>
</feature>
<keyword id="KW-1185">Reference proteome</keyword>
<keyword id="KW-0687">Ribonucleoprotein</keyword>
<keyword id="KW-0689">Ribosomal protein</keyword>
<comment type="similarity">
    <text evidence="1">Belongs to the universal ribosomal protein uS2 family.</text>
</comment>
<proteinExistence type="inferred from homology"/>
<accession>O26150</accession>
<gene>
    <name type="primary">rps2</name>
    <name type="ordered locus">MTH_44</name>
</gene>
<name>RS2_METTH</name>
<sequence>MSELLIPLDKYLAAGLHIGTQQKTADMEKYIYRVRSDGLYVLDIRKTNDRVIAASKFLSKYEPDDILAVSTRQYGQEPVRKFGEVTGARTIPGRFIPGTLTNPNYAKFIEPEVLVATDPRSDSQAIIEAKQIGIPVVALCDTENLLGNVDIAIPVNNKGRKAIALVYWLLARQFLREKGILKEDEDLDIPPTEFELKI</sequence>